<proteinExistence type="evidence at protein level"/>
<dbReference type="EC" id="2.3.1.-"/>
<dbReference type="EMBL" id="EU564338">
    <property type="protein sequence ID" value="ACB55609.1"/>
    <property type="molecule type" value="mRNA"/>
</dbReference>
<dbReference type="EMBL" id="AK050308">
    <property type="protein sequence ID" value="BAC34180.1"/>
    <property type="molecule type" value="mRNA"/>
</dbReference>
<dbReference type="EMBL" id="AK050357">
    <property type="protein sequence ID" value="BAC34207.1"/>
    <property type="molecule type" value="mRNA"/>
</dbReference>
<dbReference type="EMBL" id="BX537352">
    <property type="protein sequence ID" value="CAM27903.3"/>
    <property type="status" value="ALT_INIT"/>
    <property type="molecule type" value="Genomic_DNA"/>
</dbReference>
<dbReference type="EMBL" id="BX537352">
    <property type="protein sequence ID" value="CAM27904.1"/>
    <property type="molecule type" value="Genomic_DNA"/>
</dbReference>
<dbReference type="EMBL" id="BC010829">
    <property type="protein sequence ID" value="AAH10829.1"/>
    <property type="status" value="ALT_INIT"/>
    <property type="molecule type" value="mRNA"/>
</dbReference>
<dbReference type="CCDS" id="CCDS18171.1">
    <molecule id="Q8BGG9-1"/>
</dbReference>
<dbReference type="RefSeq" id="NP_001343218.1">
    <molecule id="Q8BGG9-1"/>
    <property type="nucleotide sequence ID" value="NM_001356289.1"/>
</dbReference>
<dbReference type="RefSeq" id="NP_663343.2">
    <molecule id="Q8BGG9-1"/>
    <property type="nucleotide sequence ID" value="NM_145368.2"/>
</dbReference>
<dbReference type="RefSeq" id="XP_006537789.1">
    <property type="nucleotide sequence ID" value="XM_006537726.2"/>
</dbReference>
<dbReference type="RefSeq" id="XP_011248270.1">
    <property type="nucleotide sequence ID" value="XM_011249968.1"/>
</dbReference>
<dbReference type="SMR" id="Q8BGG9"/>
<dbReference type="FunCoup" id="Q8BGG9">
    <property type="interactions" value="147"/>
</dbReference>
<dbReference type="STRING" id="10090.ENSMUSP00000080256"/>
<dbReference type="ESTHER" id="mouse-Q8BGG9">
    <property type="family name" value="Acyl-CoA_Thioesterase"/>
</dbReference>
<dbReference type="MEROPS" id="S09.A50"/>
<dbReference type="iPTMnet" id="Q8BGG9"/>
<dbReference type="PhosphoSitePlus" id="Q8BGG9"/>
<dbReference type="SwissPalm" id="Q8BGG9"/>
<dbReference type="jPOST" id="Q8BGG9"/>
<dbReference type="PaxDb" id="10090-ENSMUSP00000080256"/>
<dbReference type="PeptideAtlas" id="Q8BGG9"/>
<dbReference type="ProteomicsDB" id="285840">
    <molecule id="Q8BGG9-1"/>
</dbReference>
<dbReference type="ProteomicsDB" id="285841">
    <molecule id="Q8BGG9-2"/>
</dbReference>
<dbReference type="DNASU" id="209186"/>
<dbReference type="Ensembl" id="ENSMUST00000081541.9">
    <molecule id="Q8BGG9-1"/>
    <property type="protein sequence ID" value="ENSMUSP00000080256.3"/>
    <property type="gene ID" value="ENSMUSG00000060317.10"/>
</dbReference>
<dbReference type="Ensembl" id="ENSMUST00000107698.8">
    <molecule id="Q8BGG9-2"/>
    <property type="protein sequence ID" value="ENSMUSP00000103326.2"/>
    <property type="gene ID" value="ENSMUSG00000060317.10"/>
</dbReference>
<dbReference type="GeneID" id="209186"/>
<dbReference type="KEGG" id="mmu:209186"/>
<dbReference type="UCSC" id="uc008svq.1">
    <molecule id="Q8BGG9-1"/>
    <property type="organism name" value="mouse"/>
</dbReference>
<dbReference type="UCSC" id="uc012deb.1">
    <molecule id="Q8BGG9-2"/>
    <property type="organism name" value="mouse"/>
</dbReference>
<dbReference type="AGR" id="MGI:2444345"/>
<dbReference type="CTD" id="209186"/>
<dbReference type="MGI" id="MGI:2444345">
    <property type="gene designation" value="Acnat2"/>
</dbReference>
<dbReference type="VEuPathDB" id="HostDB:ENSMUSG00000060317"/>
<dbReference type="eggNOG" id="ENOG502QQ8Z">
    <property type="taxonomic scope" value="Eukaryota"/>
</dbReference>
<dbReference type="GeneTree" id="ENSGT01010000222336"/>
<dbReference type="HOGENOM" id="CLU_029849_4_0_1"/>
<dbReference type="InParanoid" id="Q8BGG9"/>
<dbReference type="OMA" id="TPKPVAW"/>
<dbReference type="OrthoDB" id="6347013at2759"/>
<dbReference type="PhylomeDB" id="Q8BGG9"/>
<dbReference type="TreeFam" id="TF314911"/>
<dbReference type="BioGRID-ORCS" id="209186">
    <property type="hits" value="2 hits in 76 CRISPR screens"/>
</dbReference>
<dbReference type="ChiTaRS" id="Acnat2">
    <property type="organism name" value="mouse"/>
</dbReference>
<dbReference type="PRO" id="PR:Q8BGG9"/>
<dbReference type="Proteomes" id="UP000000589">
    <property type="component" value="Chromosome 4"/>
</dbReference>
<dbReference type="RNAct" id="Q8BGG9">
    <property type="molecule type" value="protein"/>
</dbReference>
<dbReference type="Bgee" id="ENSMUSG00000060317">
    <property type="expression patterns" value="Expressed in right kidney and 17 other cell types or tissues"/>
</dbReference>
<dbReference type="ExpressionAtlas" id="Q8BGG9">
    <property type="expression patterns" value="baseline and differential"/>
</dbReference>
<dbReference type="GO" id="GO:0005777">
    <property type="term" value="C:peroxisome"/>
    <property type="evidence" value="ECO:0000250"/>
    <property type="project" value="UniProtKB"/>
</dbReference>
<dbReference type="GO" id="GO:0016410">
    <property type="term" value="F:N-acyltransferase activity"/>
    <property type="evidence" value="ECO:0000250"/>
    <property type="project" value="UniProtKB"/>
</dbReference>
<dbReference type="GO" id="GO:0016790">
    <property type="term" value="F:thiolester hydrolase activity"/>
    <property type="evidence" value="ECO:0007669"/>
    <property type="project" value="InterPro"/>
</dbReference>
<dbReference type="GO" id="GO:0006637">
    <property type="term" value="P:acyl-CoA metabolic process"/>
    <property type="evidence" value="ECO:0007669"/>
    <property type="project" value="InterPro"/>
</dbReference>
<dbReference type="GO" id="GO:0006631">
    <property type="term" value="P:fatty acid metabolic process"/>
    <property type="evidence" value="ECO:0000250"/>
    <property type="project" value="UniProtKB"/>
</dbReference>
<dbReference type="FunFam" id="2.60.40.2240:FF:000001">
    <property type="entry name" value="acyl-coenzyme A thioesterase 4"/>
    <property type="match status" value="1"/>
</dbReference>
<dbReference type="FunFam" id="3.40.50.1820:FF:000024">
    <property type="entry name" value="acyl-coenzyme A thioesterase 4"/>
    <property type="match status" value="1"/>
</dbReference>
<dbReference type="Gene3D" id="2.60.40.2240">
    <property type="entry name" value="Acyl-CoA thioester hydrolase/BAAT N-terminal domain"/>
    <property type="match status" value="1"/>
</dbReference>
<dbReference type="Gene3D" id="3.40.50.1820">
    <property type="entry name" value="alpha/beta hydrolase"/>
    <property type="match status" value="1"/>
</dbReference>
<dbReference type="InterPro" id="IPR029058">
    <property type="entry name" value="AB_hydrolase_fold"/>
</dbReference>
<dbReference type="InterPro" id="IPR016662">
    <property type="entry name" value="Acyl-CoA_thioEstase_long-chain"/>
</dbReference>
<dbReference type="InterPro" id="IPR014940">
    <property type="entry name" value="BAAT_C"/>
</dbReference>
<dbReference type="InterPro" id="IPR006862">
    <property type="entry name" value="Thio_Ohase/aa_AcTrfase"/>
</dbReference>
<dbReference type="InterPro" id="IPR042490">
    <property type="entry name" value="Thio_Ohase/BAAT_N"/>
</dbReference>
<dbReference type="PANTHER" id="PTHR10824:SF1">
    <property type="entry name" value="ACYL-COENZYME A AMINO ACID N-ACYLTRANSFERASE 1-RELATED"/>
    <property type="match status" value="1"/>
</dbReference>
<dbReference type="PANTHER" id="PTHR10824">
    <property type="entry name" value="ACYL-COENZYME A THIOESTERASE-RELATED"/>
    <property type="match status" value="1"/>
</dbReference>
<dbReference type="Pfam" id="PF08840">
    <property type="entry name" value="BAAT_C"/>
    <property type="match status" value="1"/>
</dbReference>
<dbReference type="Pfam" id="PF04775">
    <property type="entry name" value="Bile_Hydr_Trans"/>
    <property type="match status" value="1"/>
</dbReference>
<dbReference type="PIRSF" id="PIRSF016521">
    <property type="entry name" value="Acyl-CoA_hydro"/>
    <property type="match status" value="1"/>
</dbReference>
<dbReference type="SUPFAM" id="SSF53474">
    <property type="entry name" value="alpha/beta-Hydrolases"/>
    <property type="match status" value="1"/>
</dbReference>
<keyword id="KW-0012">Acyltransferase</keyword>
<keyword id="KW-0025">Alternative splicing</keyword>
<keyword id="KW-0276">Fatty acid metabolism</keyword>
<keyword id="KW-0443">Lipid metabolism</keyword>
<keyword id="KW-0576">Peroxisome</keyword>
<keyword id="KW-1185">Reference proteome</keyword>
<keyword id="KW-0808">Transferase</keyword>
<comment type="function">
    <text evidence="1">Acyltransferase which efficiently conjugates very long-chain and long-chain fatty acids to taurine. Shows no conjugation activity in the presence of glycine (By similarity).</text>
</comment>
<comment type="subcellular location">
    <subcellularLocation>
        <location evidence="1">Peroxisome</location>
    </subcellularLocation>
</comment>
<comment type="alternative products">
    <event type="alternative splicing"/>
    <isoform>
        <id>Q8BGG9-1</id>
        <name evidence="5">1</name>
        <sequence type="displayed"/>
    </isoform>
    <isoform>
        <id>Q8BGG9-2</id>
        <name evidence="4">2</name>
        <sequence type="described" ref="VSP_052954"/>
    </isoform>
</comment>
<comment type="similarity">
    <text evidence="3">Belongs to the C/M/P thioester hydrolase family.</text>
</comment>
<comment type="sequence caution" evidence="8">
    <conflict type="erroneous initiation">
        <sequence resource="EMBL-CDS" id="AAH10829"/>
    </conflict>
</comment>
<comment type="sequence caution" evidence="8">
    <conflict type="erroneous initiation">
        <sequence resource="EMBL-CDS" id="CAM27903"/>
    </conflict>
</comment>
<feature type="chain" id="PRO_0000352775" description="Acyl-coenzyme A amino acid N-acyltransferase 2">
    <location>
        <begin position="1"/>
        <end position="420"/>
    </location>
</feature>
<feature type="short sequence motif" description="Microbody targeting signal">
    <location>
        <begin position="418"/>
        <end position="420"/>
    </location>
</feature>
<feature type="active site" description="Charge relay system" evidence="2">
    <location>
        <position position="235"/>
    </location>
</feature>
<feature type="active site" description="Charge relay system" evidence="2">
    <location>
        <position position="329"/>
    </location>
</feature>
<feature type="active site" description="Charge relay system" evidence="2">
    <location>
        <position position="363"/>
    </location>
</feature>
<feature type="splice variant" id="VSP_052954" description="In isoform 2." evidence="6">
    <location>
        <begin position="156"/>
        <end position="173"/>
    </location>
</feature>
<feature type="sequence conflict" description="In Ref. 1; ACB55609." evidence="8" ref="1">
    <original>M</original>
    <variation>K</variation>
    <location>
        <position position="244"/>
    </location>
</feature>
<name>ACNT2_MOUSE</name>
<organism>
    <name type="scientific">Mus musculus</name>
    <name type="common">Mouse</name>
    <dbReference type="NCBI Taxonomy" id="10090"/>
    <lineage>
        <taxon>Eukaryota</taxon>
        <taxon>Metazoa</taxon>
        <taxon>Chordata</taxon>
        <taxon>Craniata</taxon>
        <taxon>Vertebrata</taxon>
        <taxon>Euteleostomi</taxon>
        <taxon>Mammalia</taxon>
        <taxon>Eutheria</taxon>
        <taxon>Euarchontoglires</taxon>
        <taxon>Glires</taxon>
        <taxon>Rodentia</taxon>
        <taxon>Myomorpha</taxon>
        <taxon>Muroidea</taxon>
        <taxon>Muridae</taxon>
        <taxon>Murinae</taxon>
        <taxon>Mus</taxon>
        <taxon>Mus</taxon>
    </lineage>
</organism>
<accession>Q8BGG9</accession>
<accession>B2D099</accession>
<accession>Q91XC7</accession>
<sequence>MMIQLIATPSNALVDEPVSIRATGLPPSQIVTIKATVKDENDNVFQSQAFYKTNEAGEVDLEKTPALGGDYVGVHPMGLFFSLKPKKAFHRLMKKDVMNSPLCICLDLYDSVNWLETVRIPSKASQRVQRWFVGPGVKREQIQEGRVRGALFLPPGKGPFPGIIDLFGLIGGLVEFRASLLASHGFAVLALAYFAYEDLPEKPQEVDLEYFEEAANFLLSHPKIQQPGIGVISTSKGAEIGLAMACYLKQVIATVCINGPTTITIFPLRYQDLVMTPIHPALERIQVHDSGALLFRYTTQYLHNKLNSQNILPVEKAQGKILFIVGENDECLDSKLHAQKAMDRLQRHGRSSGRMLAYPGAGHLIEPPYSPVCFVAWFPVLGQPMCFGGDLMAHAAAQEHSWREIQKFFRKHLLQSGSKL</sequence>
<gene>
    <name evidence="10" type="primary">Acnat2</name>
</gene>
<evidence type="ECO:0000250" key="1">
    <source>
        <dbReference type="UniProtKB" id="A2AKK5"/>
    </source>
</evidence>
<evidence type="ECO:0000250" key="2">
    <source>
        <dbReference type="UniProtKB" id="O55137"/>
    </source>
</evidence>
<evidence type="ECO:0000255" key="3"/>
<evidence type="ECO:0000269" key="4">
    <source>
    </source>
</evidence>
<evidence type="ECO:0000269" key="5">
    <source ref="1"/>
</evidence>
<evidence type="ECO:0000303" key="6">
    <source>
    </source>
</evidence>
<evidence type="ECO:0000303" key="7">
    <source ref="1"/>
</evidence>
<evidence type="ECO:0000305" key="8"/>
<evidence type="ECO:0000312" key="9">
    <source>
        <dbReference type="EMBL" id="AAH10829.1"/>
    </source>
</evidence>
<evidence type="ECO:0000312" key="10">
    <source>
        <dbReference type="EMBL" id="ACB55609.1"/>
    </source>
</evidence>
<evidence type="ECO:0000312" key="11">
    <source>
        <dbReference type="EMBL" id="BAC34180.1"/>
    </source>
</evidence>
<reference evidence="8 10" key="1">
    <citation type="submission" date="2008-03" db="EMBL/GenBank/DDBJ databases">
        <title>Identification and characterization of a novel peroxisomal acyl-CoA:amino acid N-acyltransferase (Acnat2).</title>
        <authorList>
            <person name="Reilly S.-J."/>
            <person name="Alexson S.E.H."/>
            <person name="Hunt M.C."/>
        </authorList>
    </citation>
    <scope>NUCLEOTIDE SEQUENCE [MRNA] (ISOFORM 1)</scope>
    <source>
        <strain evidence="10">129/Sv</strain>
    </source>
</reference>
<reference evidence="8 11" key="2">
    <citation type="journal article" date="2005" name="Science">
        <title>The transcriptional landscape of the mammalian genome.</title>
        <authorList>
            <person name="Carninci P."/>
            <person name="Kasukawa T."/>
            <person name="Katayama S."/>
            <person name="Gough J."/>
            <person name="Frith M.C."/>
            <person name="Maeda N."/>
            <person name="Oyama R."/>
            <person name="Ravasi T."/>
            <person name="Lenhard B."/>
            <person name="Wells C."/>
            <person name="Kodzius R."/>
            <person name="Shimokawa K."/>
            <person name="Bajic V.B."/>
            <person name="Brenner S.E."/>
            <person name="Batalov S."/>
            <person name="Forrest A.R."/>
            <person name="Zavolan M."/>
            <person name="Davis M.J."/>
            <person name="Wilming L.G."/>
            <person name="Aidinis V."/>
            <person name="Allen J.E."/>
            <person name="Ambesi-Impiombato A."/>
            <person name="Apweiler R."/>
            <person name="Aturaliya R.N."/>
            <person name="Bailey T.L."/>
            <person name="Bansal M."/>
            <person name="Baxter L."/>
            <person name="Beisel K.W."/>
            <person name="Bersano T."/>
            <person name="Bono H."/>
            <person name="Chalk A.M."/>
            <person name="Chiu K.P."/>
            <person name="Choudhary V."/>
            <person name="Christoffels A."/>
            <person name="Clutterbuck D.R."/>
            <person name="Crowe M.L."/>
            <person name="Dalla E."/>
            <person name="Dalrymple B.P."/>
            <person name="de Bono B."/>
            <person name="Della Gatta G."/>
            <person name="di Bernardo D."/>
            <person name="Down T."/>
            <person name="Engstrom P."/>
            <person name="Fagiolini M."/>
            <person name="Faulkner G."/>
            <person name="Fletcher C.F."/>
            <person name="Fukushima T."/>
            <person name="Furuno M."/>
            <person name="Futaki S."/>
            <person name="Gariboldi M."/>
            <person name="Georgii-Hemming P."/>
            <person name="Gingeras T.R."/>
            <person name="Gojobori T."/>
            <person name="Green R.E."/>
            <person name="Gustincich S."/>
            <person name="Harbers M."/>
            <person name="Hayashi Y."/>
            <person name="Hensch T.K."/>
            <person name="Hirokawa N."/>
            <person name="Hill D."/>
            <person name="Huminiecki L."/>
            <person name="Iacono M."/>
            <person name="Ikeo K."/>
            <person name="Iwama A."/>
            <person name="Ishikawa T."/>
            <person name="Jakt M."/>
            <person name="Kanapin A."/>
            <person name="Katoh M."/>
            <person name="Kawasawa Y."/>
            <person name="Kelso J."/>
            <person name="Kitamura H."/>
            <person name="Kitano H."/>
            <person name="Kollias G."/>
            <person name="Krishnan S.P."/>
            <person name="Kruger A."/>
            <person name="Kummerfeld S.K."/>
            <person name="Kurochkin I.V."/>
            <person name="Lareau L.F."/>
            <person name="Lazarevic D."/>
            <person name="Lipovich L."/>
            <person name="Liu J."/>
            <person name="Liuni S."/>
            <person name="McWilliam S."/>
            <person name="Madan Babu M."/>
            <person name="Madera M."/>
            <person name="Marchionni L."/>
            <person name="Matsuda H."/>
            <person name="Matsuzawa S."/>
            <person name="Miki H."/>
            <person name="Mignone F."/>
            <person name="Miyake S."/>
            <person name="Morris K."/>
            <person name="Mottagui-Tabar S."/>
            <person name="Mulder N."/>
            <person name="Nakano N."/>
            <person name="Nakauchi H."/>
            <person name="Ng P."/>
            <person name="Nilsson R."/>
            <person name="Nishiguchi S."/>
            <person name="Nishikawa S."/>
            <person name="Nori F."/>
            <person name="Ohara O."/>
            <person name="Okazaki Y."/>
            <person name="Orlando V."/>
            <person name="Pang K.C."/>
            <person name="Pavan W.J."/>
            <person name="Pavesi G."/>
            <person name="Pesole G."/>
            <person name="Petrovsky N."/>
            <person name="Piazza S."/>
            <person name="Reed J."/>
            <person name="Reid J.F."/>
            <person name="Ring B.Z."/>
            <person name="Ringwald M."/>
            <person name="Rost B."/>
            <person name="Ruan Y."/>
            <person name="Salzberg S.L."/>
            <person name="Sandelin A."/>
            <person name="Schneider C."/>
            <person name="Schoenbach C."/>
            <person name="Sekiguchi K."/>
            <person name="Semple C.A."/>
            <person name="Seno S."/>
            <person name="Sessa L."/>
            <person name="Sheng Y."/>
            <person name="Shibata Y."/>
            <person name="Shimada H."/>
            <person name="Shimada K."/>
            <person name="Silva D."/>
            <person name="Sinclair B."/>
            <person name="Sperling S."/>
            <person name="Stupka E."/>
            <person name="Sugiura K."/>
            <person name="Sultana R."/>
            <person name="Takenaka Y."/>
            <person name="Taki K."/>
            <person name="Tammoja K."/>
            <person name="Tan S.L."/>
            <person name="Tang S."/>
            <person name="Taylor M.S."/>
            <person name="Tegner J."/>
            <person name="Teichmann S.A."/>
            <person name="Ueda H.R."/>
            <person name="van Nimwegen E."/>
            <person name="Verardo R."/>
            <person name="Wei C.L."/>
            <person name="Yagi K."/>
            <person name="Yamanishi H."/>
            <person name="Zabarovsky E."/>
            <person name="Zhu S."/>
            <person name="Zimmer A."/>
            <person name="Hide W."/>
            <person name="Bult C."/>
            <person name="Grimmond S.M."/>
            <person name="Teasdale R.D."/>
            <person name="Liu E.T."/>
            <person name="Brusic V."/>
            <person name="Quackenbush J."/>
            <person name="Wahlestedt C."/>
            <person name="Mattick J.S."/>
            <person name="Hume D.A."/>
            <person name="Kai C."/>
            <person name="Sasaki D."/>
            <person name="Tomaru Y."/>
            <person name="Fukuda S."/>
            <person name="Kanamori-Katayama M."/>
            <person name="Suzuki M."/>
            <person name="Aoki J."/>
            <person name="Arakawa T."/>
            <person name="Iida J."/>
            <person name="Imamura K."/>
            <person name="Itoh M."/>
            <person name="Kato T."/>
            <person name="Kawaji H."/>
            <person name="Kawagashira N."/>
            <person name="Kawashima T."/>
            <person name="Kojima M."/>
            <person name="Kondo S."/>
            <person name="Konno H."/>
            <person name="Nakano K."/>
            <person name="Ninomiya N."/>
            <person name="Nishio T."/>
            <person name="Okada M."/>
            <person name="Plessy C."/>
            <person name="Shibata K."/>
            <person name="Shiraki T."/>
            <person name="Suzuki S."/>
            <person name="Tagami M."/>
            <person name="Waki K."/>
            <person name="Watahiki A."/>
            <person name="Okamura-Oho Y."/>
            <person name="Suzuki H."/>
            <person name="Kawai J."/>
            <person name="Hayashizaki Y."/>
        </authorList>
    </citation>
    <scope>NUCLEOTIDE SEQUENCE [LARGE SCALE MRNA] (ISOFORM 1)</scope>
    <source>
        <strain evidence="11">C57BL/6J</strain>
        <tissue evidence="11">Liver tumor</tissue>
    </source>
</reference>
<reference key="3">
    <citation type="journal article" date="2009" name="PLoS Biol.">
        <title>Lineage-specific biology revealed by a finished genome assembly of the mouse.</title>
        <authorList>
            <person name="Church D.M."/>
            <person name="Goodstadt L."/>
            <person name="Hillier L.W."/>
            <person name="Zody M.C."/>
            <person name="Goldstein S."/>
            <person name="She X."/>
            <person name="Bult C.J."/>
            <person name="Agarwala R."/>
            <person name="Cherry J.L."/>
            <person name="DiCuccio M."/>
            <person name="Hlavina W."/>
            <person name="Kapustin Y."/>
            <person name="Meric P."/>
            <person name="Maglott D."/>
            <person name="Birtle Z."/>
            <person name="Marques A.C."/>
            <person name="Graves T."/>
            <person name="Zhou S."/>
            <person name="Teague B."/>
            <person name="Potamousis K."/>
            <person name="Churas C."/>
            <person name="Place M."/>
            <person name="Herschleb J."/>
            <person name="Runnheim R."/>
            <person name="Forrest D."/>
            <person name="Amos-Landgraf J."/>
            <person name="Schwartz D.C."/>
            <person name="Cheng Z."/>
            <person name="Lindblad-Toh K."/>
            <person name="Eichler E.E."/>
            <person name="Ponting C.P."/>
        </authorList>
    </citation>
    <scope>NUCLEOTIDE SEQUENCE [LARGE SCALE GENOMIC DNA]</scope>
    <source>
        <strain>C57BL/6J</strain>
    </source>
</reference>
<reference evidence="8 9" key="4">
    <citation type="journal article" date="2004" name="Genome Res.">
        <title>The status, quality, and expansion of the NIH full-length cDNA project: the Mammalian Gene Collection (MGC).</title>
        <authorList>
            <consortium name="The MGC Project Team"/>
        </authorList>
    </citation>
    <scope>NUCLEOTIDE SEQUENCE [LARGE SCALE MRNA] (ISOFORM 2)</scope>
    <source>
        <strain evidence="9">FVB/N</strain>
        <tissue evidence="9">Kidney</tissue>
    </source>
</reference>
<reference key="5">
    <citation type="journal article" date="2010" name="Cell">
        <title>A tissue-specific atlas of mouse protein phosphorylation and expression.</title>
        <authorList>
            <person name="Huttlin E.L."/>
            <person name="Jedrychowski M.P."/>
            <person name="Elias J.E."/>
            <person name="Goswami T."/>
            <person name="Rad R."/>
            <person name="Beausoleil S.A."/>
            <person name="Villen J."/>
            <person name="Haas W."/>
            <person name="Sowa M.E."/>
            <person name="Gygi S.P."/>
        </authorList>
    </citation>
    <scope>IDENTIFICATION BY MASS SPECTROMETRY [LARGE SCALE ANALYSIS]</scope>
    <source>
        <tissue>Kidney</tissue>
        <tissue>Liver</tissue>
    </source>
</reference>
<protein>
    <recommendedName>
        <fullName evidence="7">Acyl-coenzyme A amino acid N-acyltransferase 2</fullName>
        <ecNumber>2.3.1.-</ecNumber>
    </recommendedName>
</protein>